<accession>Q5ZIA0</accession>
<name>MET16_CHICK</name>
<keyword id="KW-0963">Cytoplasm</keyword>
<keyword id="KW-0489">Methyltransferase</keyword>
<keyword id="KW-0539">Nucleus</keyword>
<keyword id="KW-1185">Reference proteome</keyword>
<keyword id="KW-0694">RNA-binding</keyword>
<keyword id="KW-0949">S-adenosyl-L-methionine</keyword>
<keyword id="KW-0808">Transferase</keyword>
<proteinExistence type="evidence at transcript level"/>
<reference key="1">
    <citation type="journal article" date="2005" name="Genome Biol.">
        <title>Full-length cDNAs from chicken bursal lymphocytes to facilitate gene function analysis.</title>
        <authorList>
            <person name="Caldwell R.B."/>
            <person name="Kierzek A.M."/>
            <person name="Arakawa H."/>
            <person name="Bezzubov Y."/>
            <person name="Zaim J."/>
            <person name="Fiedler P."/>
            <person name="Kutter S."/>
            <person name="Blagodatski A."/>
            <person name="Kostovska D."/>
            <person name="Koter M."/>
            <person name="Plachy J."/>
            <person name="Carninci P."/>
            <person name="Hayashizaki Y."/>
            <person name="Buerstedde J.-M."/>
        </authorList>
    </citation>
    <scope>NUCLEOTIDE SEQUENCE [LARGE SCALE MRNA]</scope>
    <source>
        <strain>CB</strain>
        <tissue>Bursa of Fabricius</tissue>
    </source>
</reference>
<comment type="function">
    <text evidence="1">RNA N6-methyltransferase that methylates adenosine residues at the N(6) position of a subset of RNAs and is involved in S-adenosyl-L-methionine homeostasis by regulating expression of MAT2A transcripts. Able to N6-methylate a subset of mRNAs and U6 small nuclear RNAs (U6 snRNAs). In contrast to the METTL3-METTL14 heterodimer, only able to methylate a limited number of RNAs: requires both a 5'UACAGAGAA-3' nonamer sequence and a specific RNA structure. Plays a key role in S-adenosyl-L-methionine homeostasis by mediating N6-methylation of MAT2A mRNAs, altering splicing of MAT2A transcripts: in presence of S-adenosyl-L-methionine, binds the 3'-UTR region of MAT2A mRNA and specifically N6-methylates the first hairpin of MAT2A mRNA, impairing MAT2A splicing and protein expression. In S-adenosyl-L-methionine-limiting conditions, binds the 3'-UTR region of MAT2A mRNA but stalls due to the lack of a methyl donor, preventing N6-methylation and promoting expression of MAT2A. In addition to mRNAs, also able to mediate N6-methylation of U6 small nuclear RNA (U6 snRNA): specifically N6-methylates adenine in position 43 of U6 snRNAs.</text>
</comment>
<comment type="catalytic activity">
    <reaction evidence="1">
        <text>adenosine in U6 snRNA + S-adenosyl-L-methionine = N(6)-methyladenosine in U6 snRNA + S-adenosyl-L-homocysteine + H(+)</text>
        <dbReference type="Rhea" id="RHEA:52808"/>
        <dbReference type="Rhea" id="RHEA-COMP:13573"/>
        <dbReference type="Rhea" id="RHEA-COMP:13574"/>
        <dbReference type="ChEBI" id="CHEBI:15378"/>
        <dbReference type="ChEBI" id="CHEBI:57856"/>
        <dbReference type="ChEBI" id="CHEBI:59789"/>
        <dbReference type="ChEBI" id="CHEBI:74411"/>
        <dbReference type="ChEBI" id="CHEBI:74449"/>
        <dbReference type="EC" id="2.1.1.346"/>
    </reaction>
</comment>
<comment type="catalytic activity">
    <reaction evidence="1">
        <text>an adenosine in mRNA + S-adenosyl-L-methionine = an N(6)-methyladenosine in mRNA + S-adenosyl-L-homocysteine + H(+)</text>
        <dbReference type="Rhea" id="RHEA:55584"/>
        <dbReference type="Rhea" id="RHEA-COMP:12414"/>
        <dbReference type="Rhea" id="RHEA-COMP:12417"/>
        <dbReference type="ChEBI" id="CHEBI:15378"/>
        <dbReference type="ChEBI" id="CHEBI:57856"/>
        <dbReference type="ChEBI" id="CHEBI:59789"/>
        <dbReference type="ChEBI" id="CHEBI:74411"/>
        <dbReference type="ChEBI" id="CHEBI:74449"/>
        <dbReference type="EC" id="2.1.1.348"/>
    </reaction>
</comment>
<comment type="activity regulation">
    <text evidence="1">Methyltransferase activity is autoinhibited by the K-loop region that blocks S-adenosyl-L-methionine-binding. Upon activation, K-loop changes conformation, allowing S-adenosyl-L-methionine-binding and subsequent methyltransferase activity. mRNA N6-adenosine-methyltransferase activity is inhibited by zinc.</text>
</comment>
<comment type="subcellular location">
    <subcellularLocation>
        <location evidence="1">Nucleus</location>
    </subcellularLocation>
    <subcellularLocation>
        <location evidence="1">Cytoplasm</location>
    </subcellularLocation>
</comment>
<comment type="domain">
    <text evidence="1">The VCR (vertebrate conserved) regions bind the first hairpin of MAT2A mRNAs. The VCR regions interact with the internal stem-loop within U6 snRNAs, inducing the conformational rearrangement of the A43-containing region of U6 snRNA, thereby modifying the RNA structure to become suitable for productive catalysis by the methyltransferase region.</text>
</comment>
<comment type="domain">
    <text evidence="1">The K-loop region occludes the S-adenosyl-L-methionine-binding pocket. Upon activation, conformation of the K-loop changes, allowing S-adenosyl-L-methionine-binding.</text>
</comment>
<comment type="similarity">
    <text evidence="3">Belongs to the methyltransferase superfamily. METTL16/RlmF family.</text>
</comment>
<organism>
    <name type="scientific">Gallus gallus</name>
    <name type="common">Chicken</name>
    <dbReference type="NCBI Taxonomy" id="9031"/>
    <lineage>
        <taxon>Eukaryota</taxon>
        <taxon>Metazoa</taxon>
        <taxon>Chordata</taxon>
        <taxon>Craniata</taxon>
        <taxon>Vertebrata</taxon>
        <taxon>Euteleostomi</taxon>
        <taxon>Archelosauria</taxon>
        <taxon>Archosauria</taxon>
        <taxon>Dinosauria</taxon>
        <taxon>Saurischia</taxon>
        <taxon>Theropoda</taxon>
        <taxon>Coelurosauria</taxon>
        <taxon>Aves</taxon>
        <taxon>Neognathae</taxon>
        <taxon>Galloanserae</taxon>
        <taxon>Galliformes</taxon>
        <taxon>Phasianidae</taxon>
        <taxon>Phasianinae</taxon>
        <taxon>Gallus</taxon>
    </lineage>
</organism>
<gene>
    <name type="primary">METTL16</name>
    <name type="synonym">METT10D</name>
    <name type="ORF">RCJMB04_28o5</name>
</gene>
<evidence type="ECO:0000250" key="1">
    <source>
        <dbReference type="UniProtKB" id="Q86W50"/>
    </source>
</evidence>
<evidence type="ECO:0000256" key="2">
    <source>
        <dbReference type="SAM" id="MobiDB-lite"/>
    </source>
</evidence>
<evidence type="ECO:0000305" key="3"/>
<feature type="chain" id="PRO_0000310769" description="RNA N(6)-adenosine-methyltransferase METTL16">
    <location>
        <begin position="1"/>
        <end position="558"/>
    </location>
</feature>
<feature type="region of interest" description="RNA-binding" evidence="1">
    <location>
        <begin position="17"/>
        <end position="20"/>
    </location>
</feature>
<feature type="region of interest" description="K-loop" evidence="1">
    <location>
        <begin position="163"/>
        <end position="167"/>
    </location>
</feature>
<feature type="region of interest" description="RNA-binding" evidence="1">
    <location>
        <begin position="199"/>
        <end position="211"/>
    </location>
</feature>
<feature type="region of interest" description="RNA-binding" evidence="1">
    <location>
        <begin position="250"/>
        <end position="254"/>
    </location>
</feature>
<feature type="region of interest" description="RNA-binding" evidence="1">
    <location>
        <begin position="277"/>
        <end position="283"/>
    </location>
</feature>
<feature type="region of interest" description="VCR 1" evidence="1">
    <location>
        <begin position="289"/>
        <end position="400"/>
    </location>
</feature>
<feature type="region of interest" description="Disordered" evidence="2">
    <location>
        <begin position="407"/>
        <end position="502"/>
    </location>
</feature>
<feature type="region of interest" description="VCR 2" evidence="1">
    <location>
        <begin position="511"/>
        <end position="558"/>
    </location>
</feature>
<feature type="compositionally biased region" description="Basic and acidic residues" evidence="2">
    <location>
        <begin position="439"/>
        <end position="461"/>
    </location>
</feature>
<feature type="compositionally biased region" description="Polar residues" evidence="2">
    <location>
        <begin position="477"/>
        <end position="488"/>
    </location>
</feature>
<feature type="binding site" evidence="1">
    <location>
        <position position="82"/>
    </location>
    <ligand>
        <name>S-adenosyl-L-methionine</name>
        <dbReference type="ChEBI" id="CHEBI:59789"/>
    </ligand>
</feature>
<feature type="binding site" evidence="1">
    <location>
        <position position="110"/>
    </location>
    <ligand>
        <name>S-adenosyl-L-methionine</name>
        <dbReference type="ChEBI" id="CHEBI:59789"/>
    </ligand>
</feature>
<feature type="binding site" evidence="1">
    <location>
        <position position="114"/>
    </location>
    <ligand>
        <name>S-adenosyl-L-methionine</name>
        <dbReference type="ChEBI" id="CHEBI:59789"/>
    </ligand>
</feature>
<feature type="binding site" evidence="1">
    <location>
        <position position="133"/>
    </location>
    <ligand>
        <name>S-adenosyl-L-methionine</name>
        <dbReference type="ChEBI" id="CHEBI:59789"/>
    </ligand>
</feature>
<feature type="binding site" evidence="1">
    <location>
        <position position="164"/>
    </location>
    <ligand>
        <name>S-adenosyl-L-methionine</name>
        <dbReference type="ChEBI" id="CHEBI:59789"/>
    </ligand>
</feature>
<feature type="binding site" evidence="1">
    <location>
        <position position="184"/>
    </location>
    <ligand>
        <name>S-adenosyl-L-methionine</name>
        <dbReference type="ChEBI" id="CHEBI:59789"/>
    </ligand>
</feature>
<dbReference type="EC" id="2.1.1.348" evidence="1"/>
<dbReference type="EC" id="2.1.1.346" evidence="1"/>
<dbReference type="EMBL" id="AJ720884">
    <property type="protein sequence ID" value="CAG32543.1"/>
    <property type="molecule type" value="mRNA"/>
</dbReference>
<dbReference type="RefSeq" id="NP_001026773.1">
    <property type="nucleotide sequence ID" value="NM_001031602.1"/>
</dbReference>
<dbReference type="SMR" id="Q5ZIA0"/>
<dbReference type="FunCoup" id="Q5ZIA0">
    <property type="interactions" value="2616"/>
</dbReference>
<dbReference type="STRING" id="9031.ENSGALP00000023989"/>
<dbReference type="PaxDb" id="9031-ENSGALP00000023989"/>
<dbReference type="GeneID" id="431184"/>
<dbReference type="KEGG" id="gga:431184"/>
<dbReference type="CTD" id="79066"/>
<dbReference type="VEuPathDB" id="HostDB:geneid_431184"/>
<dbReference type="eggNOG" id="KOG2912">
    <property type="taxonomic scope" value="Eukaryota"/>
</dbReference>
<dbReference type="HOGENOM" id="CLU_027534_0_0_1"/>
<dbReference type="InParanoid" id="Q5ZIA0"/>
<dbReference type="OrthoDB" id="514248at2759"/>
<dbReference type="PhylomeDB" id="Q5ZIA0"/>
<dbReference type="TreeFam" id="TF313132"/>
<dbReference type="PRO" id="PR:Q5ZIA0"/>
<dbReference type="Proteomes" id="UP000000539">
    <property type="component" value="Unassembled WGS sequence"/>
</dbReference>
<dbReference type="GO" id="GO:0005737">
    <property type="term" value="C:cytoplasm"/>
    <property type="evidence" value="ECO:0000250"/>
    <property type="project" value="UniProtKB"/>
</dbReference>
<dbReference type="GO" id="GO:0005634">
    <property type="term" value="C:nucleus"/>
    <property type="evidence" value="ECO:0000250"/>
    <property type="project" value="UniProtKB"/>
</dbReference>
<dbReference type="GO" id="GO:0001734">
    <property type="term" value="F:mRNA m(6)A methyltransferase activity"/>
    <property type="evidence" value="ECO:0000250"/>
    <property type="project" value="UniProtKB"/>
</dbReference>
<dbReference type="GO" id="GO:0003723">
    <property type="term" value="F:RNA binding"/>
    <property type="evidence" value="ECO:0000250"/>
    <property type="project" value="UniProtKB"/>
</dbReference>
<dbReference type="GO" id="GO:0035613">
    <property type="term" value="F:RNA stem-loop binding"/>
    <property type="evidence" value="ECO:0000250"/>
    <property type="project" value="UniProtKB"/>
</dbReference>
<dbReference type="GO" id="GO:0120048">
    <property type="term" value="F:U6 snRNA (adenine-(43)-N(6))-methyltransferase activity"/>
    <property type="evidence" value="ECO:0000250"/>
    <property type="project" value="UniProtKB"/>
</dbReference>
<dbReference type="GO" id="GO:0030629">
    <property type="term" value="F:U6 snRNA 3'-end binding"/>
    <property type="evidence" value="ECO:0000250"/>
    <property type="project" value="UniProtKB"/>
</dbReference>
<dbReference type="GO" id="GO:0006402">
    <property type="term" value="P:mRNA catabolic process"/>
    <property type="evidence" value="ECO:0000250"/>
    <property type="project" value="UniProtKB"/>
</dbReference>
<dbReference type="GO" id="GO:0061157">
    <property type="term" value="P:mRNA destabilization"/>
    <property type="evidence" value="ECO:0000250"/>
    <property type="project" value="UniProtKB"/>
</dbReference>
<dbReference type="GO" id="GO:0006397">
    <property type="term" value="P:mRNA processing"/>
    <property type="evidence" value="ECO:0000250"/>
    <property type="project" value="UniProtKB"/>
</dbReference>
<dbReference type="GO" id="GO:0010608">
    <property type="term" value="P:post-transcriptional regulation of gene expression"/>
    <property type="evidence" value="ECO:0000250"/>
    <property type="project" value="UniProtKB"/>
</dbReference>
<dbReference type="GO" id="GO:0048024">
    <property type="term" value="P:regulation of mRNA splicing, via spliceosome"/>
    <property type="evidence" value="ECO:0000250"/>
    <property type="project" value="UniProtKB"/>
</dbReference>
<dbReference type="GO" id="GO:0070475">
    <property type="term" value="P:rRNA base methylation"/>
    <property type="evidence" value="ECO:0000318"/>
    <property type="project" value="GO_Central"/>
</dbReference>
<dbReference type="GO" id="GO:0006556">
    <property type="term" value="P:S-adenosylmethionine biosynthetic process"/>
    <property type="evidence" value="ECO:0000250"/>
    <property type="project" value="UniProtKB"/>
</dbReference>
<dbReference type="GO" id="GO:0120049">
    <property type="term" value="P:snRNA (adenine-N6)-methylation"/>
    <property type="evidence" value="ECO:0000250"/>
    <property type="project" value="UniProtKB"/>
</dbReference>
<dbReference type="CDD" id="cd02440">
    <property type="entry name" value="AdoMet_MTases"/>
    <property type="match status" value="1"/>
</dbReference>
<dbReference type="FunFam" id="3.40.50.150:FF:000062">
    <property type="entry name" value="U6 small nuclear RNA (adenine-(43)-N(6))-methyltransferase"/>
    <property type="match status" value="1"/>
</dbReference>
<dbReference type="Gene3D" id="3.40.50.150">
    <property type="entry name" value="Vaccinia Virus protein VP39"/>
    <property type="match status" value="1"/>
</dbReference>
<dbReference type="InterPro" id="IPR017182">
    <property type="entry name" value="METTL16/PsiM"/>
</dbReference>
<dbReference type="InterPro" id="IPR010286">
    <property type="entry name" value="METTL16/RlmF"/>
</dbReference>
<dbReference type="InterPro" id="IPR029063">
    <property type="entry name" value="SAM-dependent_MTases_sf"/>
</dbReference>
<dbReference type="PANTHER" id="PTHR13393:SF0">
    <property type="entry name" value="RNA N6-ADENOSINE-METHYLTRANSFERASE METTL16"/>
    <property type="match status" value="1"/>
</dbReference>
<dbReference type="PANTHER" id="PTHR13393">
    <property type="entry name" value="SAM-DEPENDENT METHYLTRANSFERASE"/>
    <property type="match status" value="1"/>
</dbReference>
<dbReference type="Pfam" id="PF05971">
    <property type="entry name" value="Methyltransf_10"/>
    <property type="match status" value="1"/>
</dbReference>
<dbReference type="PIRSF" id="PIRSF037350">
    <property type="entry name" value="Mtase_ZK1128_prd"/>
    <property type="match status" value="1"/>
</dbReference>
<dbReference type="SUPFAM" id="SSF53335">
    <property type="entry name" value="S-adenosyl-L-methionine-dependent methyltransferases"/>
    <property type="match status" value="1"/>
</dbReference>
<sequence>MALNKSMHARNRYKDKPPDFAYLAGKYPEFRQHVQTTLAGRVSLNFKDPEAVRALTCTLLKEDFGLTIDIPLERLIPTVPLRLNYIHWVEDLIGHQDADKRVLRRGIDIGTGASCIYPLLGSTLNGWYFLATEVDDMCFNYAKKNVEQNNLSDLIKVVKVPQKTLLMDALKEESEIIYDFCMCNPPFFANQLEAKGVNSRNPRRPPPSSVNTGGITEIMAEGGELEFVKRIIHDSLQLKKRLRWYSCMLGKKCSLAPLKEELKIQGVPKVTHTEFCQGRTMRWALAWSFYDDVQVPSPPSKRRKLEKPRKPITFTVLASTVKELSIKAAAMGWDAVEGIAVVRAWIEKILADLKVQHKRVPCGKDEVSLFVTAIENSWVHLRRKKRERVRQLRELPRASDDVLQAMEEEKNSQNSVSNSVDCEKSKTEDSETELVAPDEDVHLTADDELREESATKELSEHMEEEETEAKQTEASFNEGSSSAEQGAQPSEEAGNLTAEKGQSPKETSRCFLFKCLMNVKKEGNDVLVEMHWVEGQNRDLMNQLCTYLRNQVLRLVAS</sequence>
<protein>
    <recommendedName>
        <fullName evidence="3">RNA N(6)-adenosine-methyltransferase METTL16</fullName>
        <ecNumber evidence="1">2.1.1.348</ecNumber>
    </recommendedName>
    <alternativeName>
        <fullName>Methyltransferase 10 domain-containing protein</fullName>
    </alternativeName>
    <alternativeName>
        <fullName>Methyltransferase-like protein 16</fullName>
    </alternativeName>
    <alternativeName>
        <fullName evidence="1">U6 small nuclear RNA (adenine-(43)-N(6))-methyltransferase</fullName>
        <ecNumber evidence="1">2.1.1.346</ecNumber>
    </alternativeName>
</protein>